<comment type="function">
    <text evidence="1">Catalyzes the phosphorylation of the position 2 hydroxy group of 4-diphosphocytidyl-2C-methyl-D-erythritol.</text>
</comment>
<comment type="catalytic activity">
    <reaction evidence="1">
        <text>4-CDP-2-C-methyl-D-erythritol + ATP = 4-CDP-2-C-methyl-D-erythritol 2-phosphate + ADP + H(+)</text>
        <dbReference type="Rhea" id="RHEA:18437"/>
        <dbReference type="ChEBI" id="CHEBI:15378"/>
        <dbReference type="ChEBI" id="CHEBI:30616"/>
        <dbReference type="ChEBI" id="CHEBI:57823"/>
        <dbReference type="ChEBI" id="CHEBI:57919"/>
        <dbReference type="ChEBI" id="CHEBI:456216"/>
        <dbReference type="EC" id="2.7.1.148"/>
    </reaction>
</comment>
<comment type="pathway">
    <text evidence="1">Isoprenoid biosynthesis; isopentenyl diphosphate biosynthesis via DXP pathway; isopentenyl diphosphate from 1-deoxy-D-xylulose 5-phosphate: step 3/6.</text>
</comment>
<comment type="similarity">
    <text evidence="1">Belongs to the GHMP kinase family. IspE subfamily.</text>
</comment>
<dbReference type="EC" id="2.7.1.148" evidence="1"/>
<dbReference type="EMBL" id="CP000020">
    <property type="protein sequence ID" value="AAW85260.1"/>
    <property type="molecule type" value="Genomic_DNA"/>
</dbReference>
<dbReference type="RefSeq" id="WP_011261467.1">
    <property type="nucleotide sequence ID" value="NC_006840.2"/>
</dbReference>
<dbReference type="RefSeq" id="YP_204148.1">
    <property type="nucleotide sequence ID" value="NC_006840.2"/>
</dbReference>
<dbReference type="SMR" id="Q5E6T6"/>
<dbReference type="STRING" id="312309.VF_0765"/>
<dbReference type="EnsemblBacteria" id="AAW85260">
    <property type="protein sequence ID" value="AAW85260"/>
    <property type="gene ID" value="VF_0765"/>
</dbReference>
<dbReference type="GeneID" id="54163432"/>
<dbReference type="KEGG" id="vfi:VF_0765"/>
<dbReference type="PATRIC" id="fig|312309.11.peg.757"/>
<dbReference type="eggNOG" id="COG1947">
    <property type="taxonomic scope" value="Bacteria"/>
</dbReference>
<dbReference type="HOGENOM" id="CLU_053057_3_0_6"/>
<dbReference type="OrthoDB" id="9809438at2"/>
<dbReference type="UniPathway" id="UPA00056">
    <property type="reaction ID" value="UER00094"/>
</dbReference>
<dbReference type="Proteomes" id="UP000000537">
    <property type="component" value="Chromosome I"/>
</dbReference>
<dbReference type="GO" id="GO:0050515">
    <property type="term" value="F:4-(cytidine 5'-diphospho)-2-C-methyl-D-erythritol kinase activity"/>
    <property type="evidence" value="ECO:0007669"/>
    <property type="project" value="UniProtKB-UniRule"/>
</dbReference>
<dbReference type="GO" id="GO:0005524">
    <property type="term" value="F:ATP binding"/>
    <property type="evidence" value="ECO:0007669"/>
    <property type="project" value="UniProtKB-UniRule"/>
</dbReference>
<dbReference type="GO" id="GO:0019288">
    <property type="term" value="P:isopentenyl diphosphate biosynthetic process, methylerythritol 4-phosphate pathway"/>
    <property type="evidence" value="ECO:0007669"/>
    <property type="project" value="UniProtKB-UniRule"/>
</dbReference>
<dbReference type="GO" id="GO:0016114">
    <property type="term" value="P:terpenoid biosynthetic process"/>
    <property type="evidence" value="ECO:0007669"/>
    <property type="project" value="InterPro"/>
</dbReference>
<dbReference type="FunFam" id="3.30.230.10:FF:000022">
    <property type="entry name" value="4-diphosphocytidyl-2-C-methyl-D-erythritol kinase"/>
    <property type="match status" value="1"/>
</dbReference>
<dbReference type="Gene3D" id="3.30.230.10">
    <property type="match status" value="1"/>
</dbReference>
<dbReference type="Gene3D" id="3.30.70.890">
    <property type="entry name" value="GHMP kinase, C-terminal domain"/>
    <property type="match status" value="1"/>
</dbReference>
<dbReference type="HAMAP" id="MF_00061">
    <property type="entry name" value="IspE"/>
    <property type="match status" value="1"/>
</dbReference>
<dbReference type="InterPro" id="IPR013750">
    <property type="entry name" value="GHMP_kinase_C_dom"/>
</dbReference>
<dbReference type="InterPro" id="IPR036554">
    <property type="entry name" value="GHMP_kinase_C_sf"/>
</dbReference>
<dbReference type="InterPro" id="IPR006204">
    <property type="entry name" value="GHMP_kinase_N_dom"/>
</dbReference>
<dbReference type="InterPro" id="IPR004424">
    <property type="entry name" value="IspE"/>
</dbReference>
<dbReference type="InterPro" id="IPR020568">
    <property type="entry name" value="Ribosomal_Su5_D2-typ_SF"/>
</dbReference>
<dbReference type="InterPro" id="IPR014721">
    <property type="entry name" value="Ribsml_uS5_D2-typ_fold_subgr"/>
</dbReference>
<dbReference type="NCBIfam" id="TIGR00154">
    <property type="entry name" value="ispE"/>
    <property type="match status" value="1"/>
</dbReference>
<dbReference type="PANTHER" id="PTHR43527">
    <property type="entry name" value="4-DIPHOSPHOCYTIDYL-2-C-METHYL-D-ERYTHRITOL KINASE, CHLOROPLASTIC"/>
    <property type="match status" value="1"/>
</dbReference>
<dbReference type="PANTHER" id="PTHR43527:SF2">
    <property type="entry name" value="4-DIPHOSPHOCYTIDYL-2-C-METHYL-D-ERYTHRITOL KINASE, CHLOROPLASTIC"/>
    <property type="match status" value="1"/>
</dbReference>
<dbReference type="Pfam" id="PF08544">
    <property type="entry name" value="GHMP_kinases_C"/>
    <property type="match status" value="1"/>
</dbReference>
<dbReference type="Pfam" id="PF00288">
    <property type="entry name" value="GHMP_kinases_N"/>
    <property type="match status" value="1"/>
</dbReference>
<dbReference type="PIRSF" id="PIRSF010376">
    <property type="entry name" value="IspE"/>
    <property type="match status" value="1"/>
</dbReference>
<dbReference type="SUPFAM" id="SSF55060">
    <property type="entry name" value="GHMP Kinase, C-terminal domain"/>
    <property type="match status" value="1"/>
</dbReference>
<dbReference type="SUPFAM" id="SSF54211">
    <property type="entry name" value="Ribosomal protein S5 domain 2-like"/>
    <property type="match status" value="1"/>
</dbReference>
<reference key="1">
    <citation type="journal article" date="2005" name="Proc. Natl. Acad. Sci. U.S.A.">
        <title>Complete genome sequence of Vibrio fischeri: a symbiotic bacterium with pathogenic congeners.</title>
        <authorList>
            <person name="Ruby E.G."/>
            <person name="Urbanowski M."/>
            <person name="Campbell J."/>
            <person name="Dunn A."/>
            <person name="Faini M."/>
            <person name="Gunsalus R."/>
            <person name="Lostroh P."/>
            <person name="Lupp C."/>
            <person name="McCann J."/>
            <person name="Millikan D."/>
            <person name="Schaefer A."/>
            <person name="Stabb E."/>
            <person name="Stevens A."/>
            <person name="Visick K."/>
            <person name="Whistler C."/>
            <person name="Greenberg E.P."/>
        </authorList>
    </citation>
    <scope>NUCLEOTIDE SEQUENCE [LARGE SCALE GENOMIC DNA]</scope>
    <source>
        <strain>ATCC 700601 / ES114</strain>
    </source>
</reference>
<keyword id="KW-0067">ATP-binding</keyword>
<keyword id="KW-0414">Isoprene biosynthesis</keyword>
<keyword id="KW-0418">Kinase</keyword>
<keyword id="KW-0547">Nucleotide-binding</keyword>
<keyword id="KW-1185">Reference proteome</keyword>
<keyword id="KW-0808">Transferase</keyword>
<name>ISPE_ALIF1</name>
<accession>Q5E6T6</accession>
<protein>
    <recommendedName>
        <fullName evidence="1">4-diphosphocytidyl-2-C-methyl-D-erythritol kinase</fullName>
        <shortName evidence="1">CMK</shortName>
        <ecNumber evidence="1">2.7.1.148</ecNumber>
    </recommendedName>
    <alternativeName>
        <fullName evidence="1">4-(cytidine-5'-diphospho)-2-C-methyl-D-erythritol kinase</fullName>
    </alternativeName>
</protein>
<feature type="chain" id="PRO_0000235151" description="4-diphosphocytidyl-2-C-methyl-D-erythritol kinase">
    <location>
        <begin position="1"/>
        <end position="288"/>
    </location>
</feature>
<feature type="active site" evidence="1">
    <location>
        <position position="13"/>
    </location>
</feature>
<feature type="active site" evidence="1">
    <location>
        <position position="138"/>
    </location>
</feature>
<feature type="binding site" evidence="1">
    <location>
        <begin position="96"/>
        <end position="106"/>
    </location>
    <ligand>
        <name>ATP</name>
        <dbReference type="ChEBI" id="CHEBI:30616"/>
    </ligand>
</feature>
<sequence length="288" mass="31710">MITKTTRWPSPAKLNLFLYINGQQENGYHELQTLFQFIDLCDHLTITANQSGQITLAPDIPGVKTEDNLIWKAATLLQQHSQCEFGAHIEIEKILPMGGGIGGGSSNAATVLVALNFLWQLNLSNDTLAALGVKLGADVPIFVHGFAAFAEGIGEKLQPATPKELWYVLIKPEVSIATVDVFTHPNLVRNTPKQPLNALLEATYVNDCEKIVRSVYPEVDYQLSWLLEYAPSRLTGTGACVFAEFNSEKEAQDVYSLIPDNATGFIARGMNTSPLNRTLEEYKSLCKI</sequence>
<evidence type="ECO:0000255" key="1">
    <source>
        <dbReference type="HAMAP-Rule" id="MF_00061"/>
    </source>
</evidence>
<proteinExistence type="inferred from homology"/>
<organism>
    <name type="scientific">Aliivibrio fischeri (strain ATCC 700601 / ES114)</name>
    <name type="common">Vibrio fischeri</name>
    <dbReference type="NCBI Taxonomy" id="312309"/>
    <lineage>
        <taxon>Bacteria</taxon>
        <taxon>Pseudomonadati</taxon>
        <taxon>Pseudomonadota</taxon>
        <taxon>Gammaproteobacteria</taxon>
        <taxon>Vibrionales</taxon>
        <taxon>Vibrionaceae</taxon>
        <taxon>Aliivibrio</taxon>
    </lineage>
</organism>
<gene>
    <name evidence="1" type="primary">ispE</name>
    <name type="ordered locus">VF_0765</name>
</gene>